<sequence>MISLYQILAEKKKKKKNDLNIFAFSVFAIICFKFYSVNAIKLPQQEVDALQQIATTLGSKFWKFDAENCKIEMVGLTETPPPTAKQEIECECSPTNDTDCHVVKFAFKDHNLPGTLPQIVKLPYLREIDLAYNYINGTLPREWASSNLTFISLLVNRLSGEIPKEFGNSSLTYLDLESNAFSGTIPQELGNLVHLKKLLLSSNKLTGTLPASLARLQNMTDFRINDLQLSGTIPSYIQNWKQLERLEMIASGLTGPIPSVISVLSNLVNLRISDIRGPVQPFPSLKNVTGLTKIILKNCNISGQIPTYLSHLKELETLDLSFNKLVGGIPSFAQAENLRFIILAGNMLEGDAPDELLRDGITVDLSYNNLKWQSPESRACRPNMNLNLNLFQSTSTKKSSKFLPCIKDFKCPRYSSCLHVNCGGSDMYVKEKKTKELYEGDGNVEGGAAKYFLKPDANWGFSSTGDFMDDNNFQNTRFTMFVPASNQSDLYKSARIAPVSLTYFHACLENGNYTINLDFAEIRFTNDENYNRLGRRLFDIYIQEKLVAKDFNIMDEAKGAQTPIIKPLTAYVTNHFLTIRLSWAGKGTTRIPTRGVYGPIISAISIVSDSKPCERPKTGMSPGAYIAIGIGAPCLIIFILGFLWICGCLPRCGRQRKDPYEEELPSGTFTLRQIKFATDDFNPTNKIGEGGFGAVFKGVLADGRVVAVKQLSSKSRQGNREFLNEIGAISCLQHPNLVKLHGFCVERAQLLLAYEYMENNSLSSALFSPKHKQIPMDWPTRFKICCGIAKGLAFLHEESPLKFVHRDIKATNILLDKDLTPKISDFGLARLDEEEKTHISTKVAGTIGYMAPEYALWGYLTFKADVYSFGVLVLEIVAGITNSNFMGAGDSVCLLEFANECVESGHLMQVVDERLRPEVDRKEAEAVIKVALVCSSASPTDRPLMSEVVAMLEGLYPVPESTPGVSRNAGDIRFKAFKDLRRGMENNSKTQCSVKSYPSSSSTSSGAGQAVQERKKEESRP</sequence>
<name>RKF1_ARATH</name>
<gene>
    <name type="primary">RKF1</name>
    <name type="ordered locus">At1g29750</name>
    <name type="ORF">F1N18.19</name>
    <name type="ORF">T3M22.1</name>
</gene>
<protein>
    <recommendedName>
        <fullName>Probable LRR receptor-like serine/threonine-protein kinase RFK1</fullName>
        <ecNumber>2.7.11.1</ecNumber>
    </recommendedName>
    <alternativeName>
        <fullName>Receptor-like kinase in flowers 1</fullName>
    </alternativeName>
</protein>
<accession>Q9FXF2</accession>
<accession>O22579</accession>
<accession>Q8RWZ9</accession>
<accession>Q9C6G6</accession>
<reference key="1">
    <citation type="journal article" date="1998" name="Plant Mol. Biol.">
        <title>Identification by PCR of receptor-like protein kinases from Arabidopsis flowers.</title>
        <authorList>
            <person name="Takahashi T."/>
            <person name="Mu J.-H."/>
            <person name="Gasch A."/>
            <person name="Chua N.-H."/>
        </authorList>
    </citation>
    <scope>NUCLEOTIDE SEQUENCE [MRNA] (ISOFORM 1)</scope>
    <scope>CATALYTIC ACTIVITY</scope>
    <scope>DEVELOPMENTAL STAGE</scope>
    <scope>TISSUE SPECIFICITY</scope>
    <source>
        <strain>cv. Columbia</strain>
    </source>
</reference>
<reference key="2">
    <citation type="journal article" date="2000" name="Nature">
        <title>Sequence and analysis of chromosome 1 of the plant Arabidopsis thaliana.</title>
        <authorList>
            <person name="Theologis A."/>
            <person name="Ecker J.R."/>
            <person name="Palm C.J."/>
            <person name="Federspiel N.A."/>
            <person name="Kaul S."/>
            <person name="White O."/>
            <person name="Alonso J."/>
            <person name="Altafi H."/>
            <person name="Araujo R."/>
            <person name="Bowman C.L."/>
            <person name="Brooks S.Y."/>
            <person name="Buehler E."/>
            <person name="Chan A."/>
            <person name="Chao Q."/>
            <person name="Chen H."/>
            <person name="Cheuk R.F."/>
            <person name="Chin C.W."/>
            <person name="Chung M.K."/>
            <person name="Conn L."/>
            <person name="Conway A.B."/>
            <person name="Conway A.R."/>
            <person name="Creasy T.H."/>
            <person name="Dewar K."/>
            <person name="Dunn P."/>
            <person name="Etgu P."/>
            <person name="Feldblyum T.V."/>
            <person name="Feng J.-D."/>
            <person name="Fong B."/>
            <person name="Fujii C.Y."/>
            <person name="Gill J.E."/>
            <person name="Goldsmith A.D."/>
            <person name="Haas B."/>
            <person name="Hansen N.F."/>
            <person name="Hughes B."/>
            <person name="Huizar L."/>
            <person name="Hunter J.L."/>
            <person name="Jenkins J."/>
            <person name="Johnson-Hopson C."/>
            <person name="Khan S."/>
            <person name="Khaykin E."/>
            <person name="Kim C.J."/>
            <person name="Koo H.L."/>
            <person name="Kremenetskaia I."/>
            <person name="Kurtz D.B."/>
            <person name="Kwan A."/>
            <person name="Lam B."/>
            <person name="Langin-Hooper S."/>
            <person name="Lee A."/>
            <person name="Lee J.M."/>
            <person name="Lenz C.A."/>
            <person name="Li J.H."/>
            <person name="Li Y.-P."/>
            <person name="Lin X."/>
            <person name="Liu S.X."/>
            <person name="Liu Z.A."/>
            <person name="Luros J.S."/>
            <person name="Maiti R."/>
            <person name="Marziali A."/>
            <person name="Militscher J."/>
            <person name="Miranda M."/>
            <person name="Nguyen M."/>
            <person name="Nierman W.C."/>
            <person name="Osborne B.I."/>
            <person name="Pai G."/>
            <person name="Peterson J."/>
            <person name="Pham P.K."/>
            <person name="Rizzo M."/>
            <person name="Rooney T."/>
            <person name="Rowley D."/>
            <person name="Sakano H."/>
            <person name="Salzberg S.L."/>
            <person name="Schwartz J.R."/>
            <person name="Shinn P."/>
            <person name="Southwick A.M."/>
            <person name="Sun H."/>
            <person name="Tallon L.J."/>
            <person name="Tambunga G."/>
            <person name="Toriumi M.J."/>
            <person name="Town C.D."/>
            <person name="Utterback T."/>
            <person name="Van Aken S."/>
            <person name="Vaysberg M."/>
            <person name="Vysotskaia V.S."/>
            <person name="Walker M."/>
            <person name="Wu D."/>
            <person name="Yu G."/>
            <person name="Fraser C.M."/>
            <person name="Venter J.C."/>
            <person name="Davis R.W."/>
        </authorList>
    </citation>
    <scope>NUCLEOTIDE SEQUENCE [LARGE SCALE GENOMIC DNA]</scope>
    <source>
        <strain>cv. Columbia</strain>
    </source>
</reference>
<reference key="3">
    <citation type="journal article" date="2017" name="Plant J.">
        <title>Araport11: a complete reannotation of the Arabidopsis thaliana reference genome.</title>
        <authorList>
            <person name="Cheng C.Y."/>
            <person name="Krishnakumar V."/>
            <person name="Chan A.P."/>
            <person name="Thibaud-Nissen F."/>
            <person name="Schobel S."/>
            <person name="Town C.D."/>
        </authorList>
    </citation>
    <scope>GENOME REANNOTATION</scope>
    <source>
        <strain>cv. Columbia</strain>
    </source>
</reference>
<reference key="4">
    <citation type="journal article" date="2003" name="Science">
        <title>Empirical analysis of transcriptional activity in the Arabidopsis genome.</title>
        <authorList>
            <person name="Yamada K."/>
            <person name="Lim J."/>
            <person name="Dale J.M."/>
            <person name="Chen H."/>
            <person name="Shinn P."/>
            <person name="Palm C.J."/>
            <person name="Southwick A.M."/>
            <person name="Wu H.C."/>
            <person name="Kim C.J."/>
            <person name="Nguyen M."/>
            <person name="Pham P.K."/>
            <person name="Cheuk R.F."/>
            <person name="Karlin-Newmann G."/>
            <person name="Liu S.X."/>
            <person name="Lam B."/>
            <person name="Sakano H."/>
            <person name="Wu T."/>
            <person name="Yu G."/>
            <person name="Miranda M."/>
            <person name="Quach H.L."/>
            <person name="Tripp M."/>
            <person name="Chang C.H."/>
            <person name="Lee J.M."/>
            <person name="Toriumi M.J."/>
            <person name="Chan M.M."/>
            <person name="Tang C.C."/>
            <person name="Onodera C.S."/>
            <person name="Deng J.M."/>
            <person name="Akiyama K."/>
            <person name="Ansari Y."/>
            <person name="Arakawa T."/>
            <person name="Banh J."/>
            <person name="Banno F."/>
            <person name="Bowser L."/>
            <person name="Brooks S.Y."/>
            <person name="Carninci P."/>
            <person name="Chao Q."/>
            <person name="Choy N."/>
            <person name="Enju A."/>
            <person name="Goldsmith A.D."/>
            <person name="Gurjal M."/>
            <person name="Hansen N.F."/>
            <person name="Hayashizaki Y."/>
            <person name="Johnson-Hopson C."/>
            <person name="Hsuan V.W."/>
            <person name="Iida K."/>
            <person name="Karnes M."/>
            <person name="Khan S."/>
            <person name="Koesema E."/>
            <person name="Ishida J."/>
            <person name="Jiang P.X."/>
            <person name="Jones T."/>
            <person name="Kawai J."/>
            <person name="Kamiya A."/>
            <person name="Meyers C."/>
            <person name="Nakajima M."/>
            <person name="Narusaka M."/>
            <person name="Seki M."/>
            <person name="Sakurai T."/>
            <person name="Satou M."/>
            <person name="Tamse R."/>
            <person name="Vaysberg M."/>
            <person name="Wallender E.K."/>
            <person name="Wong C."/>
            <person name="Yamamura Y."/>
            <person name="Yuan S."/>
            <person name="Shinozaki K."/>
            <person name="Davis R.W."/>
            <person name="Theologis A."/>
            <person name="Ecker J.R."/>
        </authorList>
    </citation>
    <scope>NUCLEOTIDE SEQUENCE [LARGE SCALE MRNA] (ISOFORM 2)</scope>
    <source>
        <strain>cv. Columbia</strain>
    </source>
</reference>
<reference key="5">
    <citation type="journal article" date="2010" name="BMC Genomics">
        <title>Genome-wide cloning and sequence analysis of leucine-rich repeat receptor-like protein kinase genes in Arabidopsis thaliana.</title>
        <authorList>
            <person name="Gou X."/>
            <person name="He K."/>
            <person name="Yang H."/>
            <person name="Yuan T."/>
            <person name="Lin H."/>
            <person name="Clouse S.D."/>
            <person name="Li J."/>
        </authorList>
    </citation>
    <scope>NUCLEOTIDE SEQUENCE [LARGE SCALE MRNA] (ISOFORM 2)</scope>
    <source>
        <strain>cv. Columbia</strain>
    </source>
</reference>
<keyword id="KW-0025">Alternative splicing</keyword>
<keyword id="KW-0067">ATP-binding</keyword>
<keyword id="KW-0325">Glycoprotein</keyword>
<keyword id="KW-0418">Kinase</keyword>
<keyword id="KW-0433">Leucine-rich repeat</keyword>
<keyword id="KW-0472">Membrane</keyword>
<keyword id="KW-0547">Nucleotide-binding</keyword>
<keyword id="KW-0597">Phosphoprotein</keyword>
<keyword id="KW-0675">Receptor</keyword>
<keyword id="KW-1185">Reference proteome</keyword>
<keyword id="KW-0677">Repeat</keyword>
<keyword id="KW-0723">Serine/threonine-protein kinase</keyword>
<keyword id="KW-0732">Signal</keyword>
<keyword id="KW-0808">Transferase</keyword>
<keyword id="KW-0812">Transmembrane</keyword>
<keyword id="KW-1133">Transmembrane helix</keyword>
<feature type="signal peptide" evidence="2">
    <location>
        <begin position="1"/>
        <end position="39"/>
    </location>
</feature>
<feature type="chain" id="PRO_0000387519" description="Probable LRR receptor-like serine/threonine-protein kinase RFK1">
    <location>
        <begin position="40"/>
        <end position="1021"/>
    </location>
</feature>
<feature type="topological domain" description="Extracellular" evidence="2">
    <location>
        <begin position="41"/>
        <end position="625"/>
    </location>
</feature>
<feature type="transmembrane region" description="Helical" evidence="2">
    <location>
        <begin position="626"/>
        <end position="646"/>
    </location>
</feature>
<feature type="topological domain" description="Cytoplasmic" evidence="2">
    <location>
        <begin position="647"/>
        <end position="1021"/>
    </location>
</feature>
<feature type="repeat" description="LRR 1">
    <location>
        <begin position="99"/>
        <end position="122"/>
    </location>
</feature>
<feature type="repeat" description="LRR 2">
    <location>
        <begin position="123"/>
        <end position="146"/>
    </location>
</feature>
<feature type="repeat" description="LRR 3">
    <location>
        <begin position="148"/>
        <end position="168"/>
    </location>
</feature>
<feature type="repeat" description="LRR 4">
    <location>
        <begin position="169"/>
        <end position="192"/>
    </location>
</feature>
<feature type="repeat" description="LRR 5">
    <location>
        <begin position="193"/>
        <end position="216"/>
    </location>
</feature>
<feature type="repeat" description="LRR 6">
    <location>
        <begin position="218"/>
        <end position="240"/>
    </location>
</feature>
<feature type="repeat" description="LRR 7">
    <location>
        <begin position="241"/>
        <end position="266"/>
    </location>
</feature>
<feature type="repeat" description="LRR 8">
    <location>
        <begin position="288"/>
        <end position="312"/>
    </location>
</feature>
<feature type="repeat" description="LRR 9">
    <location>
        <begin position="313"/>
        <end position="336"/>
    </location>
</feature>
<feature type="repeat" description="LRR 10">
    <location>
        <begin position="338"/>
        <end position="359"/>
    </location>
</feature>
<feature type="repeat" description="LRR 11">
    <location>
        <begin position="361"/>
        <end position="381"/>
    </location>
</feature>
<feature type="domain" description="Protein kinase" evidence="3">
    <location>
        <begin position="681"/>
        <end position="956"/>
    </location>
</feature>
<feature type="region of interest" description="Disordered" evidence="5">
    <location>
        <begin position="985"/>
        <end position="1021"/>
    </location>
</feature>
<feature type="compositionally biased region" description="Low complexity" evidence="5">
    <location>
        <begin position="993"/>
        <end position="1005"/>
    </location>
</feature>
<feature type="compositionally biased region" description="Basic and acidic residues" evidence="5">
    <location>
        <begin position="1012"/>
        <end position="1021"/>
    </location>
</feature>
<feature type="active site" description="Proton acceptor" evidence="3 4">
    <location>
        <position position="807"/>
    </location>
</feature>
<feature type="binding site" evidence="3">
    <location>
        <begin position="687"/>
        <end position="695"/>
    </location>
    <ligand>
        <name>ATP</name>
        <dbReference type="ChEBI" id="CHEBI:30616"/>
    </ligand>
</feature>
<feature type="binding site" evidence="3">
    <location>
        <position position="709"/>
    </location>
    <ligand>
        <name>ATP</name>
        <dbReference type="ChEBI" id="CHEBI:30616"/>
    </ligand>
</feature>
<feature type="modified residue" description="Phosphothreonine" evidence="1">
    <location>
        <position position="670"/>
    </location>
</feature>
<feature type="modified residue" description="Phosphotyrosine" evidence="1">
    <location>
        <position position="754"/>
    </location>
</feature>
<feature type="modified residue" description="Phosphoserine" evidence="1">
    <location>
        <position position="840"/>
    </location>
</feature>
<feature type="modified residue" description="Phosphothreonine" evidence="1">
    <location>
        <position position="841"/>
    </location>
</feature>
<feature type="modified residue" description="Phosphothreonine" evidence="1">
    <location>
        <position position="846"/>
    </location>
</feature>
<feature type="modified residue" description="Phosphotyrosine" evidence="1">
    <location>
        <position position="854"/>
    </location>
</feature>
<feature type="glycosylation site" description="N-linked (GlcNAc...) asparagine" evidence="2">
    <location>
        <position position="96"/>
    </location>
</feature>
<feature type="glycosylation site" description="N-linked (GlcNAc...) asparagine" evidence="2">
    <location>
        <position position="136"/>
    </location>
</feature>
<feature type="glycosylation site" description="N-linked (GlcNAc...) asparagine" evidence="2">
    <location>
        <position position="147"/>
    </location>
</feature>
<feature type="glycosylation site" description="N-linked (GlcNAc...) asparagine" evidence="2">
    <location>
        <position position="168"/>
    </location>
</feature>
<feature type="glycosylation site" description="N-linked (GlcNAc...) asparagine" evidence="2">
    <location>
        <position position="218"/>
    </location>
</feature>
<feature type="glycosylation site" description="N-linked (GlcNAc...) asparagine" evidence="2">
    <location>
        <position position="287"/>
    </location>
</feature>
<feature type="glycosylation site" description="N-linked (GlcNAc...) asparagine" evidence="2">
    <location>
        <position position="300"/>
    </location>
</feature>
<feature type="glycosylation site" description="N-linked (GlcNAc...) asparagine" evidence="2">
    <location>
        <position position="486"/>
    </location>
</feature>
<feature type="glycosylation site" description="N-linked (GlcNAc...) asparagine" evidence="2">
    <location>
        <position position="512"/>
    </location>
</feature>
<feature type="splice variant" id="VSP_038277" description="In isoform 2." evidence="7 8">
    <original>SLYQILAEKKKKKKNDLNIFAFSVFAIICFKFYSVNAIKLPQQE</original>
    <variation>VKAKKSVILVVAQVIELIFYDVCFCVCSL</variation>
    <location>
        <begin position="3"/>
        <end position="46"/>
    </location>
</feature>
<feature type="sequence conflict" description="In Ref. 1; AAC50043." evidence="9" ref="1">
    <original>S</original>
    <variation>P</variation>
    <location>
        <position position="25"/>
    </location>
</feature>
<feature type="sequence conflict" description="In Ref. 1; AAC50043." evidence="9" ref="1">
    <original>KSSKFLPCIKD</original>
    <variation>NRANFCRVSR</variation>
    <location>
        <begin position="398"/>
        <end position="408"/>
    </location>
</feature>
<feature type="sequence conflict" description="In Ref. 1; AAC50043." evidence="9" ref="1">
    <original>T</original>
    <variation>P</variation>
    <location>
        <position position="434"/>
    </location>
</feature>
<feature type="sequence conflict" description="In Ref. 1; AAC50043." evidence="9" ref="1">
    <original>V</original>
    <variation>G</variation>
    <location>
        <position position="927"/>
    </location>
</feature>
<comment type="catalytic activity">
    <reaction evidence="6">
        <text>L-seryl-[protein] + ATP = O-phospho-L-seryl-[protein] + ADP + H(+)</text>
        <dbReference type="Rhea" id="RHEA:17989"/>
        <dbReference type="Rhea" id="RHEA-COMP:9863"/>
        <dbReference type="Rhea" id="RHEA-COMP:11604"/>
        <dbReference type="ChEBI" id="CHEBI:15378"/>
        <dbReference type="ChEBI" id="CHEBI:29999"/>
        <dbReference type="ChEBI" id="CHEBI:30616"/>
        <dbReference type="ChEBI" id="CHEBI:83421"/>
        <dbReference type="ChEBI" id="CHEBI:456216"/>
        <dbReference type="EC" id="2.7.11.1"/>
    </reaction>
</comment>
<comment type="catalytic activity">
    <reaction evidence="6">
        <text>L-threonyl-[protein] + ATP = O-phospho-L-threonyl-[protein] + ADP + H(+)</text>
        <dbReference type="Rhea" id="RHEA:46608"/>
        <dbReference type="Rhea" id="RHEA-COMP:11060"/>
        <dbReference type="Rhea" id="RHEA-COMP:11605"/>
        <dbReference type="ChEBI" id="CHEBI:15378"/>
        <dbReference type="ChEBI" id="CHEBI:30013"/>
        <dbReference type="ChEBI" id="CHEBI:30616"/>
        <dbReference type="ChEBI" id="CHEBI:61977"/>
        <dbReference type="ChEBI" id="CHEBI:456216"/>
        <dbReference type="EC" id="2.7.11.1"/>
    </reaction>
</comment>
<comment type="interaction">
    <interactant intactId="EBI-20652553">
        <id>Q9FXF2-2</id>
    </interactant>
    <interactant intactId="EBI-16954682">
        <id>Q9M9S4</id>
        <label>At1g14390</label>
    </interactant>
    <organismsDiffer>false</organismsDiffer>
    <experiments>2</experiments>
</comment>
<comment type="subcellular location">
    <subcellularLocation>
        <location evidence="9">Membrane</location>
        <topology evidence="9">Single-pass type I membrane protein</topology>
    </subcellularLocation>
</comment>
<comment type="alternative products">
    <event type="alternative splicing"/>
    <isoform>
        <id>Q9FXF2-1</id>
        <name>1</name>
        <sequence type="displayed"/>
    </isoform>
    <isoform>
        <id>Q9FXF2-2</id>
        <name>2</name>
        <sequence type="described" ref="VSP_038277"/>
    </isoform>
</comment>
<comment type="tissue specificity">
    <text evidence="6">Mostly expressed in flower buds, especially in stamens.</text>
</comment>
<comment type="developmental stage">
    <text evidence="6">First detected in early flower primordia and during stamen development. Later expressed in anthers and in pollen.</text>
</comment>
<comment type="similarity">
    <text evidence="3">Belongs to the protein kinase superfamily. Ser/Thr protein kinase family.</text>
</comment>
<evidence type="ECO:0000250" key="1">
    <source>
        <dbReference type="UniProtKB" id="O48814"/>
    </source>
</evidence>
<evidence type="ECO:0000255" key="2"/>
<evidence type="ECO:0000255" key="3">
    <source>
        <dbReference type="PROSITE-ProRule" id="PRU00159"/>
    </source>
</evidence>
<evidence type="ECO:0000255" key="4">
    <source>
        <dbReference type="PROSITE-ProRule" id="PRU10027"/>
    </source>
</evidence>
<evidence type="ECO:0000256" key="5">
    <source>
        <dbReference type="SAM" id="MobiDB-lite"/>
    </source>
</evidence>
<evidence type="ECO:0000269" key="6">
    <source>
    </source>
</evidence>
<evidence type="ECO:0000303" key="7">
    <source>
    </source>
</evidence>
<evidence type="ECO:0000303" key="8">
    <source>
    </source>
</evidence>
<evidence type="ECO:0000305" key="9"/>
<dbReference type="EC" id="2.7.11.1"/>
<dbReference type="EMBL" id="AF024648">
    <property type="protein sequence ID" value="AAC50043.1"/>
    <property type="molecule type" value="mRNA"/>
</dbReference>
<dbReference type="EMBL" id="AC008030">
    <property type="protein sequence ID" value="AAG10619.1"/>
    <property type="molecule type" value="Genomic_DNA"/>
</dbReference>
<dbReference type="EMBL" id="AC079288">
    <property type="protein sequence ID" value="AAG50773.1"/>
    <property type="molecule type" value="Genomic_DNA"/>
</dbReference>
<dbReference type="EMBL" id="CP002684">
    <property type="protein sequence ID" value="AEE31124.1"/>
    <property type="molecule type" value="Genomic_DNA"/>
</dbReference>
<dbReference type="EMBL" id="CP002684">
    <property type="protein sequence ID" value="AEE31125.1"/>
    <property type="molecule type" value="Genomic_DNA"/>
</dbReference>
<dbReference type="EMBL" id="AY091006">
    <property type="protein sequence ID" value="AAM14028.1"/>
    <property type="molecule type" value="mRNA"/>
</dbReference>
<dbReference type="EMBL" id="AY142598">
    <property type="protein sequence ID" value="AAN13167.1"/>
    <property type="molecule type" value="mRNA"/>
</dbReference>
<dbReference type="EMBL" id="FJ708642">
    <property type="protein sequence ID" value="ACN59238.1"/>
    <property type="molecule type" value="mRNA"/>
</dbReference>
<dbReference type="PIR" id="A86421">
    <property type="entry name" value="A86421"/>
</dbReference>
<dbReference type="RefSeq" id="NP_174268.7">
    <molecule id="Q9FXF2-1"/>
    <property type="nucleotide sequence ID" value="NM_102715.8"/>
</dbReference>
<dbReference type="RefSeq" id="NP_850955.5">
    <molecule id="Q9FXF2-2"/>
    <property type="nucleotide sequence ID" value="NM_180624.6"/>
</dbReference>
<dbReference type="SMR" id="Q9FXF2"/>
<dbReference type="BioGRID" id="25088">
    <property type="interactions" value="6"/>
</dbReference>
<dbReference type="FunCoup" id="Q9FXF2">
    <property type="interactions" value="328"/>
</dbReference>
<dbReference type="IntAct" id="Q9FXF2">
    <property type="interactions" value="7"/>
</dbReference>
<dbReference type="STRING" id="3702.Q9FXF2"/>
<dbReference type="GlyCosmos" id="Q9FXF2">
    <property type="glycosylation" value="9 sites, No reported glycans"/>
</dbReference>
<dbReference type="GlyGen" id="Q9FXF2">
    <property type="glycosylation" value="10 sites"/>
</dbReference>
<dbReference type="iPTMnet" id="Q9FXF2"/>
<dbReference type="PaxDb" id="3702-AT1G29750.2"/>
<dbReference type="ProteomicsDB" id="234813">
    <molecule id="Q9FXF2-1"/>
</dbReference>
<dbReference type="EnsemblPlants" id="AT1G29750.1">
    <molecule id="Q9FXF2-2"/>
    <property type="protein sequence ID" value="AT1G29750.1"/>
    <property type="gene ID" value="AT1G29750"/>
</dbReference>
<dbReference type="EnsemblPlants" id="AT1G29750.2">
    <molecule id="Q9FXF2-1"/>
    <property type="protein sequence ID" value="AT1G29750.2"/>
    <property type="gene ID" value="AT1G29750"/>
</dbReference>
<dbReference type="GeneID" id="839853"/>
<dbReference type="Gramene" id="AT1G29750.1">
    <molecule id="Q9FXF2-2"/>
    <property type="protein sequence ID" value="AT1G29750.1"/>
    <property type="gene ID" value="AT1G29750"/>
</dbReference>
<dbReference type="Gramene" id="AT1G29750.2">
    <molecule id="Q9FXF2-1"/>
    <property type="protein sequence ID" value="AT1G29750.2"/>
    <property type="gene ID" value="AT1G29750"/>
</dbReference>
<dbReference type="KEGG" id="ath:AT1G29750"/>
<dbReference type="Araport" id="AT1G29750"/>
<dbReference type="TAIR" id="AT1G29750">
    <property type="gene designation" value="RKF1"/>
</dbReference>
<dbReference type="eggNOG" id="ENOG502QW9B">
    <property type="taxonomic scope" value="Eukaryota"/>
</dbReference>
<dbReference type="InParanoid" id="Q9FXF2"/>
<dbReference type="OMA" id="EWAMECE"/>
<dbReference type="PhylomeDB" id="Q9FXF2"/>
<dbReference type="PRO" id="PR:Q9FXF2"/>
<dbReference type="Proteomes" id="UP000006548">
    <property type="component" value="Chromosome 1"/>
</dbReference>
<dbReference type="ExpressionAtlas" id="Q9FXF2">
    <property type="expression patterns" value="baseline and differential"/>
</dbReference>
<dbReference type="GO" id="GO:0016020">
    <property type="term" value="C:membrane"/>
    <property type="evidence" value="ECO:0007669"/>
    <property type="project" value="UniProtKB-SubCell"/>
</dbReference>
<dbReference type="GO" id="GO:0005524">
    <property type="term" value="F:ATP binding"/>
    <property type="evidence" value="ECO:0007669"/>
    <property type="project" value="UniProtKB-KW"/>
</dbReference>
<dbReference type="GO" id="GO:0106310">
    <property type="term" value="F:protein serine kinase activity"/>
    <property type="evidence" value="ECO:0007669"/>
    <property type="project" value="RHEA"/>
</dbReference>
<dbReference type="GO" id="GO:0004674">
    <property type="term" value="F:protein serine/threonine kinase activity"/>
    <property type="evidence" value="ECO:0000314"/>
    <property type="project" value="TAIR"/>
</dbReference>
<dbReference type="CDD" id="cd14066">
    <property type="entry name" value="STKc_IRAK"/>
    <property type="match status" value="1"/>
</dbReference>
<dbReference type="FunFam" id="3.30.200.20:FF:000217">
    <property type="entry name" value="probable LRR receptor-like serine/threonine-protein kinase At1g53430"/>
    <property type="match status" value="1"/>
</dbReference>
<dbReference type="FunFam" id="3.80.10.10:FF:000452">
    <property type="entry name" value="Probable LRR receptor-like serine/threonine-protein kinase RFK1"/>
    <property type="match status" value="1"/>
</dbReference>
<dbReference type="FunFam" id="3.80.10.10:FF:000874">
    <property type="entry name" value="Probable LRR receptor-like serine/threonine-protein kinase RFK1"/>
    <property type="match status" value="1"/>
</dbReference>
<dbReference type="FunFam" id="2.60.120.430:FF:000004">
    <property type="entry name" value="Putative leucine-rich repeat receptor-like serine/threonine-protein kinase"/>
    <property type="match status" value="1"/>
</dbReference>
<dbReference type="FunFam" id="1.10.510.10:FF:000044">
    <property type="entry name" value="Putative LRR receptor-like serine/threonine-protein kinase"/>
    <property type="match status" value="1"/>
</dbReference>
<dbReference type="FunFam" id="3.80.10.10:FF:000433">
    <property type="entry name" value="Putative LRR receptor-like serine/threonine-protein kinase isoform A"/>
    <property type="match status" value="1"/>
</dbReference>
<dbReference type="Gene3D" id="2.60.120.430">
    <property type="entry name" value="Galactose-binding lectin"/>
    <property type="match status" value="1"/>
</dbReference>
<dbReference type="Gene3D" id="3.30.200.20">
    <property type="entry name" value="Phosphorylase Kinase, domain 1"/>
    <property type="match status" value="1"/>
</dbReference>
<dbReference type="Gene3D" id="3.80.10.10">
    <property type="entry name" value="Ribonuclease Inhibitor"/>
    <property type="match status" value="3"/>
</dbReference>
<dbReference type="Gene3D" id="1.10.510.10">
    <property type="entry name" value="Transferase(Phosphotransferase) domain 1"/>
    <property type="match status" value="1"/>
</dbReference>
<dbReference type="InterPro" id="IPR011009">
    <property type="entry name" value="Kinase-like_dom_sf"/>
</dbReference>
<dbReference type="InterPro" id="IPR001611">
    <property type="entry name" value="Leu-rich_rpt"/>
</dbReference>
<dbReference type="InterPro" id="IPR032675">
    <property type="entry name" value="LRR_dom_sf"/>
</dbReference>
<dbReference type="InterPro" id="IPR051824">
    <property type="entry name" value="LRR_Rcpt-Like_S/T_Kinase"/>
</dbReference>
<dbReference type="InterPro" id="IPR021720">
    <property type="entry name" value="Malectin_dom"/>
</dbReference>
<dbReference type="InterPro" id="IPR000719">
    <property type="entry name" value="Prot_kinase_dom"/>
</dbReference>
<dbReference type="InterPro" id="IPR017441">
    <property type="entry name" value="Protein_kinase_ATP_BS"/>
</dbReference>
<dbReference type="InterPro" id="IPR001245">
    <property type="entry name" value="Ser-Thr/Tyr_kinase_cat_dom"/>
</dbReference>
<dbReference type="InterPro" id="IPR008271">
    <property type="entry name" value="Ser/Thr_kinase_AS"/>
</dbReference>
<dbReference type="PANTHER" id="PTHR48006">
    <property type="entry name" value="LEUCINE-RICH REPEAT-CONTAINING PROTEIN DDB_G0281931-RELATED"/>
    <property type="match status" value="1"/>
</dbReference>
<dbReference type="PANTHER" id="PTHR48006:SF72">
    <property type="entry name" value="LRR RECEPTOR-LIKE SERINE_THREONINE-PROTEIN KINASE RFK1-RELATED"/>
    <property type="match status" value="1"/>
</dbReference>
<dbReference type="Pfam" id="PF00560">
    <property type="entry name" value="LRR_1"/>
    <property type="match status" value="3"/>
</dbReference>
<dbReference type="Pfam" id="PF11721">
    <property type="entry name" value="Malectin"/>
    <property type="match status" value="1"/>
</dbReference>
<dbReference type="Pfam" id="PF07714">
    <property type="entry name" value="PK_Tyr_Ser-Thr"/>
    <property type="match status" value="1"/>
</dbReference>
<dbReference type="SMART" id="SM00220">
    <property type="entry name" value="S_TKc"/>
    <property type="match status" value="1"/>
</dbReference>
<dbReference type="SUPFAM" id="SSF52058">
    <property type="entry name" value="L domain-like"/>
    <property type="match status" value="1"/>
</dbReference>
<dbReference type="SUPFAM" id="SSF56112">
    <property type="entry name" value="Protein kinase-like (PK-like)"/>
    <property type="match status" value="1"/>
</dbReference>
<dbReference type="PROSITE" id="PS00107">
    <property type="entry name" value="PROTEIN_KINASE_ATP"/>
    <property type="match status" value="1"/>
</dbReference>
<dbReference type="PROSITE" id="PS50011">
    <property type="entry name" value="PROTEIN_KINASE_DOM"/>
    <property type="match status" value="1"/>
</dbReference>
<dbReference type="PROSITE" id="PS00108">
    <property type="entry name" value="PROTEIN_KINASE_ST"/>
    <property type="match status" value="1"/>
</dbReference>
<organism>
    <name type="scientific">Arabidopsis thaliana</name>
    <name type="common">Mouse-ear cress</name>
    <dbReference type="NCBI Taxonomy" id="3702"/>
    <lineage>
        <taxon>Eukaryota</taxon>
        <taxon>Viridiplantae</taxon>
        <taxon>Streptophyta</taxon>
        <taxon>Embryophyta</taxon>
        <taxon>Tracheophyta</taxon>
        <taxon>Spermatophyta</taxon>
        <taxon>Magnoliopsida</taxon>
        <taxon>eudicotyledons</taxon>
        <taxon>Gunneridae</taxon>
        <taxon>Pentapetalae</taxon>
        <taxon>rosids</taxon>
        <taxon>malvids</taxon>
        <taxon>Brassicales</taxon>
        <taxon>Brassicaceae</taxon>
        <taxon>Camelineae</taxon>
        <taxon>Arabidopsis</taxon>
    </lineage>
</organism>
<proteinExistence type="evidence at protein level"/>